<comment type="catalytic activity">
    <reaction>
        <text>1-(5-phospho-beta-D-ribosyl)-5-[(5-phospho-beta-D-ribosylamino)methylideneamino]imidazole-4-carboxamide = 5-[(5-phospho-1-deoxy-D-ribulos-1-ylimino)methylamino]-1-(5-phospho-beta-D-ribosyl)imidazole-4-carboxamide</text>
        <dbReference type="Rhea" id="RHEA:15469"/>
        <dbReference type="ChEBI" id="CHEBI:58435"/>
        <dbReference type="ChEBI" id="CHEBI:58525"/>
        <dbReference type="EC" id="5.3.1.16"/>
    </reaction>
</comment>
<comment type="pathway">
    <text>Amino-acid biosynthesis; L-histidine biosynthesis; L-histidine from 5-phospho-alpha-D-ribose 1-diphosphate: step 4/9.</text>
</comment>
<comment type="subcellular location">
    <subcellularLocation>
        <location evidence="1">Cytoplasm</location>
    </subcellularLocation>
</comment>
<comment type="similarity">
    <text evidence="2">Belongs to the HisA/HisF family.</text>
</comment>
<sequence length="245" mass="26884">MIIPALDLIDGKVVRLHQGDYAQQRDYQHDPLSHFQQYEQQGAKLLHLVDLTGAKDPSARQIPLLRKLLAAVSIPVQVGGGIRTEEDVKTLLDAGANRIVIGSIAIKQPALVTQWFKRYGAENIVLALDVRINDTGMKQVAINGWQENSSVTLEQVIEQYLPCGLKYVLCTDISRDGTLTGSNVELYRAICQYYPQIVFQASGGIGTLNDIASLPTSGVAGVIIGRALLDEKFTLKEAIQCWQNA</sequence>
<feature type="chain" id="PRO_0000142031" description="1-(5-phosphoribosyl)-5-[(5-phosphoribosylamino)methylideneamino] imidazole-4-carboxamide isomerase 1">
    <location>
        <begin position="1"/>
        <end position="245"/>
    </location>
</feature>
<feature type="active site" description="Proton acceptor" evidence="1">
    <location>
        <position position="7"/>
    </location>
</feature>
<feature type="active site" description="Proton donor" evidence="1">
    <location>
        <position position="129"/>
    </location>
</feature>
<accession>Q7N6I4</accession>
<proteinExistence type="inferred from homology"/>
<evidence type="ECO:0000250" key="1"/>
<evidence type="ECO:0000305" key="2"/>
<gene>
    <name type="primary">hisA1</name>
    <name type="ordered locus">plu1566</name>
</gene>
<name>HIS41_PHOLL</name>
<reference key="1">
    <citation type="journal article" date="2003" name="Nat. Biotechnol.">
        <title>The genome sequence of the entomopathogenic bacterium Photorhabdus luminescens.</title>
        <authorList>
            <person name="Duchaud E."/>
            <person name="Rusniok C."/>
            <person name="Frangeul L."/>
            <person name="Buchrieser C."/>
            <person name="Givaudan A."/>
            <person name="Taourit S."/>
            <person name="Bocs S."/>
            <person name="Boursaux-Eude C."/>
            <person name="Chandler M."/>
            <person name="Charles J.-F."/>
            <person name="Dassa E."/>
            <person name="Derose R."/>
            <person name="Derzelle S."/>
            <person name="Freyssinet G."/>
            <person name="Gaudriault S."/>
            <person name="Medigue C."/>
            <person name="Lanois A."/>
            <person name="Powell K."/>
            <person name="Siguier P."/>
            <person name="Vincent R."/>
            <person name="Wingate V."/>
            <person name="Zouine M."/>
            <person name="Glaser P."/>
            <person name="Boemare N."/>
            <person name="Danchin A."/>
            <person name="Kunst F."/>
        </authorList>
    </citation>
    <scope>NUCLEOTIDE SEQUENCE [LARGE SCALE GENOMIC DNA]</scope>
    <source>
        <strain>DSM 15139 / CIP 105565 / TT01</strain>
    </source>
</reference>
<dbReference type="EC" id="5.3.1.16"/>
<dbReference type="EMBL" id="BX571864">
    <property type="protein sequence ID" value="CAE13859.1"/>
    <property type="molecule type" value="Genomic_DNA"/>
</dbReference>
<dbReference type="RefSeq" id="WP_011145863.1">
    <property type="nucleotide sequence ID" value="NC_005126.1"/>
</dbReference>
<dbReference type="SMR" id="Q7N6I4"/>
<dbReference type="STRING" id="243265.plu1566"/>
<dbReference type="GeneID" id="48847853"/>
<dbReference type="KEGG" id="plu:plu1566"/>
<dbReference type="eggNOG" id="COG0106">
    <property type="taxonomic scope" value="Bacteria"/>
</dbReference>
<dbReference type="HOGENOM" id="CLU_048577_1_2_6"/>
<dbReference type="OrthoDB" id="9807749at2"/>
<dbReference type="UniPathway" id="UPA00031">
    <property type="reaction ID" value="UER00009"/>
</dbReference>
<dbReference type="Proteomes" id="UP000002514">
    <property type="component" value="Chromosome"/>
</dbReference>
<dbReference type="GO" id="GO:0005737">
    <property type="term" value="C:cytoplasm"/>
    <property type="evidence" value="ECO:0007669"/>
    <property type="project" value="UniProtKB-SubCell"/>
</dbReference>
<dbReference type="GO" id="GO:0003949">
    <property type="term" value="F:1-(5-phosphoribosyl)-5-[(5-phosphoribosylamino)methylideneamino]imidazole-4-carboxamide isomerase activity"/>
    <property type="evidence" value="ECO:0007669"/>
    <property type="project" value="UniProtKB-UniRule"/>
</dbReference>
<dbReference type="GO" id="GO:0000105">
    <property type="term" value="P:L-histidine biosynthetic process"/>
    <property type="evidence" value="ECO:0007669"/>
    <property type="project" value="UniProtKB-UniRule"/>
</dbReference>
<dbReference type="GO" id="GO:0000162">
    <property type="term" value="P:L-tryptophan biosynthetic process"/>
    <property type="evidence" value="ECO:0007669"/>
    <property type="project" value="TreeGrafter"/>
</dbReference>
<dbReference type="CDD" id="cd04732">
    <property type="entry name" value="HisA"/>
    <property type="match status" value="1"/>
</dbReference>
<dbReference type="FunFam" id="3.20.20.70:FF:000009">
    <property type="entry name" value="1-(5-phosphoribosyl)-5-[(5-phosphoribosylamino)methylideneamino] imidazole-4-carboxamide isomerase"/>
    <property type="match status" value="1"/>
</dbReference>
<dbReference type="Gene3D" id="3.20.20.70">
    <property type="entry name" value="Aldolase class I"/>
    <property type="match status" value="1"/>
</dbReference>
<dbReference type="HAMAP" id="MF_01014">
    <property type="entry name" value="HisA"/>
    <property type="match status" value="1"/>
</dbReference>
<dbReference type="InterPro" id="IPR013785">
    <property type="entry name" value="Aldolase_TIM"/>
</dbReference>
<dbReference type="InterPro" id="IPR006062">
    <property type="entry name" value="His_biosynth"/>
</dbReference>
<dbReference type="InterPro" id="IPR006063">
    <property type="entry name" value="HisA_bact_arch"/>
</dbReference>
<dbReference type="InterPro" id="IPR044524">
    <property type="entry name" value="Isoase_HisA-like"/>
</dbReference>
<dbReference type="InterPro" id="IPR023016">
    <property type="entry name" value="Isoase_HisA-like_bact"/>
</dbReference>
<dbReference type="InterPro" id="IPR011060">
    <property type="entry name" value="RibuloseP-bd_barrel"/>
</dbReference>
<dbReference type="NCBIfam" id="TIGR00007">
    <property type="entry name" value="1-(5-phosphoribosyl)-5-[(5-phosphoribosylamino)methylideneamino]imidazole-4-carboxamide isomerase"/>
    <property type="match status" value="1"/>
</dbReference>
<dbReference type="PANTHER" id="PTHR43090">
    <property type="entry name" value="1-(5-PHOSPHORIBOSYL)-5-[(5-PHOSPHORIBOSYLAMINO)METHYLIDENEAMINO] IMIDAZOLE-4-CARBOXAMIDE ISOMERASE"/>
    <property type="match status" value="1"/>
</dbReference>
<dbReference type="PANTHER" id="PTHR43090:SF2">
    <property type="entry name" value="1-(5-PHOSPHORIBOSYL)-5-[(5-PHOSPHORIBOSYLAMINO)METHYLIDENEAMINO] IMIDAZOLE-4-CARBOXAMIDE ISOMERASE"/>
    <property type="match status" value="1"/>
</dbReference>
<dbReference type="Pfam" id="PF00977">
    <property type="entry name" value="His_biosynth"/>
    <property type="match status" value="1"/>
</dbReference>
<dbReference type="SUPFAM" id="SSF51366">
    <property type="entry name" value="Ribulose-phoshate binding barrel"/>
    <property type="match status" value="1"/>
</dbReference>
<keyword id="KW-0028">Amino-acid biosynthesis</keyword>
<keyword id="KW-0963">Cytoplasm</keyword>
<keyword id="KW-0368">Histidine biosynthesis</keyword>
<keyword id="KW-0413">Isomerase</keyword>
<keyword id="KW-1185">Reference proteome</keyword>
<organism>
    <name type="scientific">Photorhabdus laumondii subsp. laumondii (strain DSM 15139 / CIP 105565 / TT01)</name>
    <name type="common">Photorhabdus luminescens subsp. laumondii</name>
    <dbReference type="NCBI Taxonomy" id="243265"/>
    <lineage>
        <taxon>Bacteria</taxon>
        <taxon>Pseudomonadati</taxon>
        <taxon>Pseudomonadota</taxon>
        <taxon>Gammaproteobacteria</taxon>
        <taxon>Enterobacterales</taxon>
        <taxon>Morganellaceae</taxon>
        <taxon>Photorhabdus</taxon>
    </lineage>
</organism>
<protein>
    <recommendedName>
        <fullName>1-(5-phosphoribosyl)-5-[(5-phosphoribosylamino)methylideneamino] imidazole-4-carboxamide isomerase 1</fullName>
        <ecNumber>5.3.1.16</ecNumber>
    </recommendedName>
    <alternativeName>
        <fullName>Phosphoribosylformimino-5-aminoimidazole carboxamide ribotide isomerase 1</fullName>
    </alternativeName>
</protein>